<protein>
    <recommendedName>
        <fullName>Uncharacterized protein aq_493</fullName>
    </recommendedName>
</protein>
<name>Y493_AQUAE</name>
<feature type="chain" id="PRO_0000186865" description="Uncharacterized protein aq_493">
    <location>
        <begin position="1"/>
        <end position="322"/>
    </location>
</feature>
<proteinExistence type="predicted"/>
<reference key="1">
    <citation type="journal article" date="1998" name="Nature">
        <title>The complete genome of the hyperthermophilic bacterium Aquifex aeolicus.</title>
        <authorList>
            <person name="Deckert G."/>
            <person name="Warren P.V."/>
            <person name="Gaasterland T."/>
            <person name="Young W.G."/>
            <person name="Lenox A.L."/>
            <person name="Graham D.E."/>
            <person name="Overbeek R."/>
            <person name="Snead M.A."/>
            <person name="Keller M."/>
            <person name="Aujay M."/>
            <person name="Huber R."/>
            <person name="Feldman R.A."/>
            <person name="Short J.M."/>
            <person name="Olsen G.J."/>
            <person name="Swanson R.V."/>
        </authorList>
    </citation>
    <scope>NUCLEOTIDE SEQUENCE [LARGE SCALE GENOMIC DNA]</scope>
    <source>
        <strain>VF5</strain>
    </source>
</reference>
<dbReference type="EMBL" id="AE000657">
    <property type="protein sequence ID" value="AAC06745.1"/>
    <property type="molecule type" value="Genomic_DNA"/>
</dbReference>
<dbReference type="PIR" id="C70344">
    <property type="entry name" value="C70344"/>
</dbReference>
<dbReference type="RefSeq" id="WP_010880281.1">
    <property type="nucleotide sequence ID" value="NC_000918.1"/>
</dbReference>
<dbReference type="SMR" id="O66783"/>
<dbReference type="STRING" id="224324.aq_493"/>
<dbReference type="EnsemblBacteria" id="AAC06745">
    <property type="protein sequence ID" value="AAC06745"/>
    <property type="gene ID" value="aq_493"/>
</dbReference>
<dbReference type="eggNOG" id="COG1463">
    <property type="taxonomic scope" value="Bacteria"/>
</dbReference>
<dbReference type="HOGENOM" id="CLU_862340_0_0_0"/>
<dbReference type="InParanoid" id="O66783"/>
<dbReference type="Proteomes" id="UP000000798">
    <property type="component" value="Chromosome"/>
</dbReference>
<dbReference type="GO" id="GO:0005886">
    <property type="term" value="C:plasma membrane"/>
    <property type="evidence" value="ECO:0000318"/>
    <property type="project" value="GO_Central"/>
</dbReference>
<dbReference type="GO" id="GO:0120014">
    <property type="term" value="F:phospholipid transfer activity"/>
    <property type="evidence" value="ECO:0000318"/>
    <property type="project" value="GO_Central"/>
</dbReference>
<dbReference type="GO" id="GO:0120010">
    <property type="term" value="P:intermembrane phospholipid transfer"/>
    <property type="evidence" value="ECO:0000318"/>
    <property type="project" value="GO_Central"/>
</dbReference>
<dbReference type="InterPro" id="IPR052336">
    <property type="entry name" value="MlaD_Phospholipid_Transporter"/>
</dbReference>
<dbReference type="PANTHER" id="PTHR33371:SF4">
    <property type="entry name" value="INTERMEMBRANE PHOSPHOLIPID TRANSPORT SYSTEM BINDING PROTEIN MLAD"/>
    <property type="match status" value="1"/>
</dbReference>
<dbReference type="PANTHER" id="PTHR33371">
    <property type="entry name" value="INTERMEMBRANE PHOSPHOLIPID TRANSPORT SYSTEM BINDING PROTEIN MLAD-RELATED"/>
    <property type="match status" value="1"/>
</dbReference>
<gene>
    <name type="ordered locus">aq_493</name>
</gene>
<organism>
    <name type="scientific">Aquifex aeolicus (strain VF5)</name>
    <dbReference type="NCBI Taxonomy" id="224324"/>
    <lineage>
        <taxon>Bacteria</taxon>
        <taxon>Pseudomonadati</taxon>
        <taxon>Aquificota</taxon>
        <taxon>Aquificia</taxon>
        <taxon>Aquificales</taxon>
        <taxon>Aquificaceae</taxon>
        <taxon>Aquifex</taxon>
    </lineage>
</organism>
<sequence>MTESLNRDLPVLLATLNKLSSDADRILLENREDIRKIAYNLSIVMEKVKDDLPVLVENLKELSVNLNTVVKNNKVNINKTLVSLRKTTENLSRASYKLDKILADLESGKGTLGKLLKDEELYENVNQGVKALGKAGKVVEKTQLYIGLRGELYREGDSKGILSVRLVPDRDKYYLLEVVGDSRGRVYREEYLDGREVVKKEFKPEFTLQYARNFSLFGRTLTLRGGLKENTGGVGADYYIYRDKYLFADLWDFGRKDRPQDKDLKPNLQIGIHWYINRNLYVRFGGDDLLNSKLRGFFGGVGLEFVDEDLKYLLGGIGVPIR</sequence>
<accession>O66783</accession>
<keyword id="KW-1185">Reference proteome</keyword>